<keyword id="KW-0687">Ribonucleoprotein</keyword>
<keyword id="KW-0689">Ribosomal protein</keyword>
<gene>
    <name evidence="1" type="primary">rpsJ</name>
    <name type="ordered locus">Erum6080</name>
    <name type="ordered locus">ERWE_CDS_06390</name>
</gene>
<evidence type="ECO:0000255" key="1">
    <source>
        <dbReference type="HAMAP-Rule" id="MF_00508"/>
    </source>
</evidence>
<evidence type="ECO:0000305" key="2"/>
<reference key="1">
    <citation type="journal article" date="2005" name="Proc. Natl. Acad. Sci. U.S.A.">
        <title>The genome of the heartwater agent Ehrlichia ruminantium contains multiple tandem repeats of actively variable copy number.</title>
        <authorList>
            <person name="Collins N.E."/>
            <person name="Liebenberg J."/>
            <person name="de Villiers E.P."/>
            <person name="Brayton K.A."/>
            <person name="Louw E."/>
            <person name="Pretorius A."/>
            <person name="Faber F.E."/>
            <person name="van Heerden H."/>
            <person name="Josemans A."/>
            <person name="van Kleef M."/>
            <person name="Steyn H.C."/>
            <person name="van Strijp M.F."/>
            <person name="Zweygarth E."/>
            <person name="Jongejan F."/>
            <person name="Maillard J.C."/>
            <person name="Berthier D."/>
            <person name="Botha M."/>
            <person name="Joubert F."/>
            <person name="Corton C.H."/>
            <person name="Thomson N.R."/>
            <person name="Allsopp M.T."/>
            <person name="Allsopp B.A."/>
        </authorList>
    </citation>
    <scope>NUCLEOTIDE SEQUENCE [LARGE SCALE GENOMIC DNA]</scope>
    <source>
        <strain>Welgevonden</strain>
    </source>
</reference>
<reference key="2">
    <citation type="journal article" date="2006" name="J. Bacteriol.">
        <title>Comparative genomic analysis of three strains of Ehrlichia ruminantium reveals an active process of genome size plasticity.</title>
        <authorList>
            <person name="Frutos R."/>
            <person name="Viari A."/>
            <person name="Ferraz C."/>
            <person name="Morgat A."/>
            <person name="Eychenie S."/>
            <person name="Kandassamy Y."/>
            <person name="Chantal I."/>
            <person name="Bensaid A."/>
            <person name="Coissac E."/>
            <person name="Vachiery N."/>
            <person name="Demaille J."/>
            <person name="Martinez D."/>
        </authorList>
    </citation>
    <scope>NUCLEOTIDE SEQUENCE [LARGE SCALE GENOMIC DNA]</scope>
    <source>
        <strain>Welgevonden</strain>
    </source>
</reference>
<sequence>MVMVTQKIYIELKAFDSYLLDRSARSIILTAKRSGARVNGPIFFPRRVAKFIVNRSTHVDKKSREQFEIRTHKRLISLPKANSTIIQALMSLQLPAGVDVKVKVIGGSNNG</sequence>
<name>RS10_EHRRW</name>
<feature type="chain" id="PRO_0000237043" description="Small ribosomal subunit protein uS10">
    <location>
        <begin position="1"/>
        <end position="111"/>
    </location>
</feature>
<organism>
    <name type="scientific">Ehrlichia ruminantium (strain Welgevonden)</name>
    <dbReference type="NCBI Taxonomy" id="254945"/>
    <lineage>
        <taxon>Bacteria</taxon>
        <taxon>Pseudomonadati</taxon>
        <taxon>Pseudomonadota</taxon>
        <taxon>Alphaproteobacteria</taxon>
        <taxon>Rickettsiales</taxon>
        <taxon>Anaplasmataceae</taxon>
        <taxon>Ehrlichia</taxon>
    </lineage>
</organism>
<proteinExistence type="inferred from homology"/>
<comment type="function">
    <text evidence="1">Involved in the binding of tRNA to the ribosomes.</text>
</comment>
<comment type="subunit">
    <text evidence="1">Part of the 30S ribosomal subunit.</text>
</comment>
<comment type="similarity">
    <text evidence="1">Belongs to the universal ribosomal protein uS10 family.</text>
</comment>
<protein>
    <recommendedName>
        <fullName evidence="1">Small ribosomal subunit protein uS10</fullName>
    </recommendedName>
    <alternativeName>
        <fullName evidence="2">30S ribosomal protein S10</fullName>
    </alternativeName>
</protein>
<accession>Q5HAS1</accession>
<accession>Q5FD57</accession>
<dbReference type="EMBL" id="CR767821">
    <property type="protein sequence ID" value="CAH58340.1"/>
    <property type="molecule type" value="Genomic_DNA"/>
</dbReference>
<dbReference type="EMBL" id="CR925678">
    <property type="protein sequence ID" value="CAI27133.1"/>
    <property type="molecule type" value="Genomic_DNA"/>
</dbReference>
<dbReference type="SMR" id="Q5HAS1"/>
<dbReference type="KEGG" id="eru:Erum6080"/>
<dbReference type="KEGG" id="erw:ERWE_CDS_06390"/>
<dbReference type="eggNOG" id="COG0051">
    <property type="taxonomic scope" value="Bacteria"/>
</dbReference>
<dbReference type="HOGENOM" id="CLU_122625_1_3_5"/>
<dbReference type="Proteomes" id="UP000001021">
    <property type="component" value="Chromosome"/>
</dbReference>
<dbReference type="GO" id="GO:1990904">
    <property type="term" value="C:ribonucleoprotein complex"/>
    <property type="evidence" value="ECO:0007669"/>
    <property type="project" value="UniProtKB-KW"/>
</dbReference>
<dbReference type="GO" id="GO:0005840">
    <property type="term" value="C:ribosome"/>
    <property type="evidence" value="ECO:0007669"/>
    <property type="project" value="UniProtKB-KW"/>
</dbReference>
<dbReference type="GO" id="GO:0003735">
    <property type="term" value="F:structural constituent of ribosome"/>
    <property type="evidence" value="ECO:0007669"/>
    <property type="project" value="InterPro"/>
</dbReference>
<dbReference type="GO" id="GO:0000049">
    <property type="term" value="F:tRNA binding"/>
    <property type="evidence" value="ECO:0007669"/>
    <property type="project" value="UniProtKB-UniRule"/>
</dbReference>
<dbReference type="GO" id="GO:0006412">
    <property type="term" value="P:translation"/>
    <property type="evidence" value="ECO:0007669"/>
    <property type="project" value="UniProtKB-UniRule"/>
</dbReference>
<dbReference type="FunFam" id="3.30.70.600:FF:000003">
    <property type="entry name" value="30S ribosomal protein S10"/>
    <property type="match status" value="1"/>
</dbReference>
<dbReference type="Gene3D" id="3.30.70.600">
    <property type="entry name" value="Ribosomal protein S10 domain"/>
    <property type="match status" value="1"/>
</dbReference>
<dbReference type="HAMAP" id="MF_00508">
    <property type="entry name" value="Ribosomal_uS10"/>
    <property type="match status" value="1"/>
</dbReference>
<dbReference type="InterPro" id="IPR001848">
    <property type="entry name" value="Ribosomal_uS10"/>
</dbReference>
<dbReference type="InterPro" id="IPR027486">
    <property type="entry name" value="Ribosomal_uS10_dom"/>
</dbReference>
<dbReference type="InterPro" id="IPR036838">
    <property type="entry name" value="Ribosomal_uS10_dom_sf"/>
</dbReference>
<dbReference type="NCBIfam" id="NF001861">
    <property type="entry name" value="PRK00596.1"/>
    <property type="match status" value="1"/>
</dbReference>
<dbReference type="NCBIfam" id="TIGR01049">
    <property type="entry name" value="rpsJ_bact"/>
    <property type="match status" value="1"/>
</dbReference>
<dbReference type="PANTHER" id="PTHR11700">
    <property type="entry name" value="30S RIBOSOMAL PROTEIN S10 FAMILY MEMBER"/>
    <property type="match status" value="1"/>
</dbReference>
<dbReference type="Pfam" id="PF00338">
    <property type="entry name" value="Ribosomal_S10"/>
    <property type="match status" value="1"/>
</dbReference>
<dbReference type="PRINTS" id="PR00971">
    <property type="entry name" value="RIBOSOMALS10"/>
</dbReference>
<dbReference type="SMART" id="SM01403">
    <property type="entry name" value="Ribosomal_S10"/>
    <property type="match status" value="1"/>
</dbReference>
<dbReference type="SUPFAM" id="SSF54999">
    <property type="entry name" value="Ribosomal protein S10"/>
    <property type="match status" value="1"/>
</dbReference>